<accession>Q8XJ13</accession>
<gene>
    <name evidence="1" type="primary">ruvA</name>
    <name type="ordered locus">CPE1948</name>
</gene>
<keyword id="KW-0963">Cytoplasm</keyword>
<keyword id="KW-0227">DNA damage</keyword>
<keyword id="KW-0233">DNA recombination</keyword>
<keyword id="KW-0234">DNA repair</keyword>
<keyword id="KW-0238">DNA-binding</keyword>
<keyword id="KW-1185">Reference proteome</keyword>
<sequence>MYEYIRGQFQGISKDYVVIELNNIGYKIFTSGNTMSNMPKVGDEVLLYLEQIVREDFIGLYGFTTREELEMFKLLLSINGVGAKAALSLLSISTVNNLKYAIMMGDEKHITRAPGIGKKTAQRIILELKDKLKPDELTSEEGQLIEGINDNSDYSFNINETLSALMALGYTEKEAQKALEKVDKTLSIENMIKESLKLLMR</sequence>
<dbReference type="EMBL" id="BA000016">
    <property type="protein sequence ID" value="BAB81654.1"/>
    <property type="molecule type" value="Genomic_DNA"/>
</dbReference>
<dbReference type="RefSeq" id="WP_003451248.1">
    <property type="nucleotide sequence ID" value="NC_003366.1"/>
</dbReference>
<dbReference type="SMR" id="Q8XJ13"/>
<dbReference type="STRING" id="195102.gene:10491217"/>
<dbReference type="GeneID" id="93001515"/>
<dbReference type="KEGG" id="cpe:CPE1948"/>
<dbReference type="HOGENOM" id="CLU_087936_3_0_9"/>
<dbReference type="Proteomes" id="UP000000818">
    <property type="component" value="Chromosome"/>
</dbReference>
<dbReference type="GO" id="GO:0005737">
    <property type="term" value="C:cytoplasm"/>
    <property type="evidence" value="ECO:0007669"/>
    <property type="project" value="UniProtKB-SubCell"/>
</dbReference>
<dbReference type="GO" id="GO:0009379">
    <property type="term" value="C:Holliday junction helicase complex"/>
    <property type="evidence" value="ECO:0007669"/>
    <property type="project" value="InterPro"/>
</dbReference>
<dbReference type="GO" id="GO:0048476">
    <property type="term" value="C:Holliday junction resolvase complex"/>
    <property type="evidence" value="ECO:0007669"/>
    <property type="project" value="UniProtKB-UniRule"/>
</dbReference>
<dbReference type="GO" id="GO:0005524">
    <property type="term" value="F:ATP binding"/>
    <property type="evidence" value="ECO:0007669"/>
    <property type="project" value="InterPro"/>
</dbReference>
<dbReference type="GO" id="GO:0000400">
    <property type="term" value="F:four-way junction DNA binding"/>
    <property type="evidence" value="ECO:0007669"/>
    <property type="project" value="UniProtKB-UniRule"/>
</dbReference>
<dbReference type="GO" id="GO:0009378">
    <property type="term" value="F:four-way junction helicase activity"/>
    <property type="evidence" value="ECO:0007669"/>
    <property type="project" value="InterPro"/>
</dbReference>
<dbReference type="GO" id="GO:0006310">
    <property type="term" value="P:DNA recombination"/>
    <property type="evidence" value="ECO:0007669"/>
    <property type="project" value="UniProtKB-UniRule"/>
</dbReference>
<dbReference type="GO" id="GO:0006281">
    <property type="term" value="P:DNA repair"/>
    <property type="evidence" value="ECO:0007669"/>
    <property type="project" value="UniProtKB-UniRule"/>
</dbReference>
<dbReference type="CDD" id="cd14332">
    <property type="entry name" value="UBA_RuvA_C"/>
    <property type="match status" value="1"/>
</dbReference>
<dbReference type="Gene3D" id="1.10.150.20">
    <property type="entry name" value="5' to 3' exonuclease, C-terminal subdomain"/>
    <property type="match status" value="1"/>
</dbReference>
<dbReference type="Gene3D" id="1.10.8.10">
    <property type="entry name" value="DNA helicase RuvA subunit, C-terminal domain"/>
    <property type="match status" value="1"/>
</dbReference>
<dbReference type="Gene3D" id="2.40.50.140">
    <property type="entry name" value="Nucleic acid-binding proteins"/>
    <property type="match status" value="1"/>
</dbReference>
<dbReference type="HAMAP" id="MF_00031">
    <property type="entry name" value="DNA_HJ_migration_RuvA"/>
    <property type="match status" value="1"/>
</dbReference>
<dbReference type="InterPro" id="IPR013849">
    <property type="entry name" value="DNA_helicase_Holl-junc_RuvA_I"/>
</dbReference>
<dbReference type="InterPro" id="IPR003583">
    <property type="entry name" value="Hlx-hairpin-Hlx_DNA-bd_motif"/>
</dbReference>
<dbReference type="InterPro" id="IPR012340">
    <property type="entry name" value="NA-bd_OB-fold"/>
</dbReference>
<dbReference type="InterPro" id="IPR000085">
    <property type="entry name" value="RuvA"/>
</dbReference>
<dbReference type="InterPro" id="IPR010994">
    <property type="entry name" value="RuvA_2-like"/>
</dbReference>
<dbReference type="InterPro" id="IPR011114">
    <property type="entry name" value="RuvA_C"/>
</dbReference>
<dbReference type="InterPro" id="IPR036267">
    <property type="entry name" value="RuvA_C_sf"/>
</dbReference>
<dbReference type="NCBIfam" id="TIGR00084">
    <property type="entry name" value="ruvA"/>
    <property type="match status" value="1"/>
</dbReference>
<dbReference type="Pfam" id="PF14520">
    <property type="entry name" value="HHH_5"/>
    <property type="match status" value="1"/>
</dbReference>
<dbReference type="Pfam" id="PF07499">
    <property type="entry name" value="RuvA_C"/>
    <property type="match status" value="1"/>
</dbReference>
<dbReference type="Pfam" id="PF01330">
    <property type="entry name" value="RuvA_N"/>
    <property type="match status" value="1"/>
</dbReference>
<dbReference type="SMART" id="SM00278">
    <property type="entry name" value="HhH1"/>
    <property type="match status" value="2"/>
</dbReference>
<dbReference type="SUPFAM" id="SSF46929">
    <property type="entry name" value="DNA helicase RuvA subunit, C-terminal domain"/>
    <property type="match status" value="1"/>
</dbReference>
<dbReference type="SUPFAM" id="SSF50249">
    <property type="entry name" value="Nucleic acid-binding proteins"/>
    <property type="match status" value="1"/>
</dbReference>
<dbReference type="SUPFAM" id="SSF47781">
    <property type="entry name" value="RuvA domain 2-like"/>
    <property type="match status" value="1"/>
</dbReference>
<feature type="chain" id="PRO_0000094623" description="Holliday junction branch migration complex subunit RuvA">
    <location>
        <begin position="1"/>
        <end position="201"/>
    </location>
</feature>
<feature type="region of interest" description="Domain I" evidence="1">
    <location>
        <begin position="1"/>
        <end position="64"/>
    </location>
</feature>
<feature type="region of interest" description="Domain II" evidence="1">
    <location>
        <begin position="65"/>
        <end position="143"/>
    </location>
</feature>
<feature type="region of interest" description="Flexible linker" evidence="1">
    <location>
        <begin position="144"/>
        <end position="152"/>
    </location>
</feature>
<feature type="region of interest" description="Domain III" evidence="1">
    <location>
        <begin position="153"/>
        <end position="201"/>
    </location>
</feature>
<evidence type="ECO:0000255" key="1">
    <source>
        <dbReference type="HAMAP-Rule" id="MF_00031"/>
    </source>
</evidence>
<protein>
    <recommendedName>
        <fullName evidence="1">Holliday junction branch migration complex subunit RuvA</fullName>
    </recommendedName>
</protein>
<proteinExistence type="inferred from homology"/>
<comment type="function">
    <text evidence="1">The RuvA-RuvB-RuvC complex processes Holliday junction (HJ) DNA during genetic recombination and DNA repair, while the RuvA-RuvB complex plays an important role in the rescue of blocked DNA replication forks via replication fork reversal (RFR). RuvA specifically binds to HJ cruciform DNA, conferring on it an open structure. The RuvB hexamer acts as an ATP-dependent pump, pulling dsDNA into and through the RuvAB complex. HJ branch migration allows RuvC to scan DNA until it finds its consensus sequence, where it cleaves and resolves the cruciform DNA.</text>
</comment>
<comment type="subunit">
    <text evidence="1">Homotetramer. Forms an RuvA(8)-RuvB(12)-Holliday junction (HJ) complex. HJ DNA is sandwiched between 2 RuvA tetramers; dsDNA enters through RuvA and exits via RuvB. An RuvB hexamer assembles on each DNA strand where it exits the tetramer. Each RuvB hexamer is contacted by two RuvA subunits (via domain III) on 2 adjacent RuvB subunits; this complex drives branch migration. In the full resolvosome a probable DNA-RuvA(4)-RuvB(12)-RuvC(2) complex forms which resolves the HJ.</text>
</comment>
<comment type="subcellular location">
    <subcellularLocation>
        <location evidence="1">Cytoplasm</location>
    </subcellularLocation>
</comment>
<comment type="domain">
    <text evidence="1">Has three domains with a flexible linker between the domains II and III and assumes an 'L' shape. Domain III is highly mobile and contacts RuvB.</text>
</comment>
<comment type="similarity">
    <text evidence="1">Belongs to the RuvA family.</text>
</comment>
<name>RUVA_CLOPE</name>
<reference key="1">
    <citation type="journal article" date="2002" name="Proc. Natl. Acad. Sci. U.S.A.">
        <title>Complete genome sequence of Clostridium perfringens, an anaerobic flesh-eater.</title>
        <authorList>
            <person name="Shimizu T."/>
            <person name="Ohtani K."/>
            <person name="Hirakawa H."/>
            <person name="Ohshima K."/>
            <person name="Yamashita A."/>
            <person name="Shiba T."/>
            <person name="Ogasawara N."/>
            <person name="Hattori M."/>
            <person name="Kuhara S."/>
            <person name="Hayashi H."/>
        </authorList>
    </citation>
    <scope>NUCLEOTIDE SEQUENCE [LARGE SCALE GENOMIC DNA]</scope>
    <source>
        <strain>13 / Type A</strain>
    </source>
</reference>
<organism>
    <name type="scientific">Clostridium perfringens (strain 13 / Type A)</name>
    <dbReference type="NCBI Taxonomy" id="195102"/>
    <lineage>
        <taxon>Bacteria</taxon>
        <taxon>Bacillati</taxon>
        <taxon>Bacillota</taxon>
        <taxon>Clostridia</taxon>
        <taxon>Eubacteriales</taxon>
        <taxon>Clostridiaceae</taxon>
        <taxon>Clostridium</taxon>
    </lineage>
</organism>